<name>LGT_DEHM1</name>
<protein>
    <recommendedName>
        <fullName evidence="1">Phosphatidylglycerol--prolipoprotein diacylglyceryl transferase</fullName>
        <ecNumber evidence="1">2.5.1.145</ecNumber>
    </recommendedName>
</protein>
<dbReference type="EC" id="2.5.1.145" evidence="1"/>
<dbReference type="EMBL" id="CP000027">
    <property type="protein sequence ID" value="AAW39728.1"/>
    <property type="molecule type" value="Genomic_DNA"/>
</dbReference>
<dbReference type="RefSeq" id="WP_010936668.1">
    <property type="nucleotide sequence ID" value="NC_002936.3"/>
</dbReference>
<dbReference type="SMR" id="Q3Z7W0"/>
<dbReference type="FunCoup" id="Q3Z7W0">
    <property type="interactions" value="202"/>
</dbReference>
<dbReference type="STRING" id="243164.DET0966"/>
<dbReference type="GeneID" id="3229690"/>
<dbReference type="KEGG" id="det:DET0966"/>
<dbReference type="PATRIC" id="fig|243164.10.peg.915"/>
<dbReference type="eggNOG" id="COG0682">
    <property type="taxonomic scope" value="Bacteria"/>
</dbReference>
<dbReference type="HOGENOM" id="CLU_013386_0_1_0"/>
<dbReference type="InParanoid" id="Q3Z7W0"/>
<dbReference type="UniPathway" id="UPA00664"/>
<dbReference type="Proteomes" id="UP000008289">
    <property type="component" value="Chromosome"/>
</dbReference>
<dbReference type="GO" id="GO:0005886">
    <property type="term" value="C:plasma membrane"/>
    <property type="evidence" value="ECO:0007669"/>
    <property type="project" value="UniProtKB-SubCell"/>
</dbReference>
<dbReference type="GO" id="GO:0008961">
    <property type="term" value="F:phosphatidylglycerol-prolipoprotein diacylglyceryl transferase activity"/>
    <property type="evidence" value="ECO:0007669"/>
    <property type="project" value="UniProtKB-UniRule"/>
</dbReference>
<dbReference type="GO" id="GO:0042158">
    <property type="term" value="P:lipoprotein biosynthetic process"/>
    <property type="evidence" value="ECO:0007669"/>
    <property type="project" value="UniProtKB-UniRule"/>
</dbReference>
<dbReference type="HAMAP" id="MF_01147">
    <property type="entry name" value="Lgt"/>
    <property type="match status" value="1"/>
</dbReference>
<dbReference type="InterPro" id="IPR001640">
    <property type="entry name" value="Lgt"/>
</dbReference>
<dbReference type="PANTHER" id="PTHR30589:SF0">
    <property type="entry name" value="PHOSPHATIDYLGLYCEROL--PROLIPOPROTEIN DIACYLGLYCERYL TRANSFERASE"/>
    <property type="match status" value="1"/>
</dbReference>
<dbReference type="PANTHER" id="PTHR30589">
    <property type="entry name" value="PROLIPOPROTEIN DIACYLGLYCERYL TRANSFERASE"/>
    <property type="match status" value="1"/>
</dbReference>
<dbReference type="Pfam" id="PF01790">
    <property type="entry name" value="LGT"/>
    <property type="match status" value="1"/>
</dbReference>
<sequence>MFEINVDPVAFSIGSLVVKWYGIMMALGVIALVSWIFWRIKRGADISYDTVLTAAIIAIPSGIIFSKLLHVIDAWEYYSLNPGAILSGEGLTIFGAIIGATIGLWIYSRYSHFNLGYLLDVAVPGILLGQAIGRVGCLLNGCCYGEYGGSGCSVIYTNPASAAPYGVEVVPTQAYEIIFLLCLFAFSLFIAKKLRPDGQLFLLYISLYAAWRVAIGFVRVNDDFALGLEQAQVVGLILIALAVPFFIYRQRKQKEADKNT</sequence>
<feature type="chain" id="PRO_1000065472" description="Phosphatidylglycerol--prolipoprotein diacylglyceryl transferase">
    <location>
        <begin position="1"/>
        <end position="260"/>
    </location>
</feature>
<feature type="transmembrane region" description="Helical" evidence="1">
    <location>
        <begin position="17"/>
        <end position="37"/>
    </location>
</feature>
<feature type="transmembrane region" description="Helical" evidence="1">
    <location>
        <begin position="52"/>
        <end position="72"/>
    </location>
</feature>
<feature type="transmembrane region" description="Helical" evidence="1">
    <location>
        <begin position="85"/>
        <end position="105"/>
    </location>
</feature>
<feature type="transmembrane region" description="Helical" evidence="1">
    <location>
        <begin position="113"/>
        <end position="133"/>
    </location>
</feature>
<feature type="transmembrane region" description="Helical" evidence="1">
    <location>
        <begin position="170"/>
        <end position="190"/>
    </location>
</feature>
<feature type="transmembrane region" description="Helical" evidence="1">
    <location>
        <begin position="198"/>
        <end position="218"/>
    </location>
</feature>
<feature type="transmembrane region" description="Helical" evidence="1">
    <location>
        <begin position="227"/>
        <end position="247"/>
    </location>
</feature>
<feature type="binding site" evidence="1">
    <location>
        <position position="134"/>
    </location>
    <ligand>
        <name>a 1,2-diacyl-sn-glycero-3-phospho-(1'-sn-glycerol)</name>
        <dbReference type="ChEBI" id="CHEBI:64716"/>
    </ligand>
</feature>
<keyword id="KW-1003">Cell membrane</keyword>
<keyword id="KW-0472">Membrane</keyword>
<keyword id="KW-0808">Transferase</keyword>
<keyword id="KW-0812">Transmembrane</keyword>
<keyword id="KW-1133">Transmembrane helix</keyword>
<evidence type="ECO:0000255" key="1">
    <source>
        <dbReference type="HAMAP-Rule" id="MF_01147"/>
    </source>
</evidence>
<gene>
    <name evidence="1" type="primary">lgt</name>
    <name type="ordered locus">DET0966</name>
</gene>
<comment type="function">
    <text evidence="1">Catalyzes the transfer of the diacylglyceryl group from phosphatidylglycerol to the sulfhydryl group of the N-terminal cysteine of a prolipoprotein, the first step in the formation of mature lipoproteins.</text>
</comment>
<comment type="catalytic activity">
    <reaction evidence="1">
        <text>L-cysteinyl-[prolipoprotein] + a 1,2-diacyl-sn-glycero-3-phospho-(1'-sn-glycerol) = an S-1,2-diacyl-sn-glyceryl-L-cysteinyl-[prolipoprotein] + sn-glycerol 1-phosphate + H(+)</text>
        <dbReference type="Rhea" id="RHEA:56712"/>
        <dbReference type="Rhea" id="RHEA-COMP:14679"/>
        <dbReference type="Rhea" id="RHEA-COMP:14680"/>
        <dbReference type="ChEBI" id="CHEBI:15378"/>
        <dbReference type="ChEBI" id="CHEBI:29950"/>
        <dbReference type="ChEBI" id="CHEBI:57685"/>
        <dbReference type="ChEBI" id="CHEBI:64716"/>
        <dbReference type="ChEBI" id="CHEBI:140658"/>
        <dbReference type="EC" id="2.5.1.145"/>
    </reaction>
</comment>
<comment type="pathway">
    <text evidence="1">Protein modification; lipoprotein biosynthesis (diacylglyceryl transfer).</text>
</comment>
<comment type="subcellular location">
    <subcellularLocation>
        <location evidence="1">Cell membrane</location>
        <topology evidence="1">Multi-pass membrane protein</topology>
    </subcellularLocation>
</comment>
<comment type="similarity">
    <text evidence="1">Belongs to the Lgt family.</text>
</comment>
<accession>Q3Z7W0</accession>
<organism>
    <name type="scientific">Dehalococcoides mccartyi (strain ATCC BAA-2266 / KCTC 15142 / 195)</name>
    <name type="common">Dehalococcoides ethenogenes (strain 195)</name>
    <dbReference type="NCBI Taxonomy" id="243164"/>
    <lineage>
        <taxon>Bacteria</taxon>
        <taxon>Bacillati</taxon>
        <taxon>Chloroflexota</taxon>
        <taxon>Dehalococcoidia</taxon>
        <taxon>Dehalococcoidales</taxon>
        <taxon>Dehalococcoidaceae</taxon>
        <taxon>Dehalococcoides</taxon>
    </lineage>
</organism>
<reference key="1">
    <citation type="journal article" date="2005" name="Science">
        <title>Genome sequence of the PCE-dechlorinating bacterium Dehalococcoides ethenogenes.</title>
        <authorList>
            <person name="Seshadri R."/>
            <person name="Adrian L."/>
            <person name="Fouts D.E."/>
            <person name="Eisen J.A."/>
            <person name="Phillippy A.M."/>
            <person name="Methe B.A."/>
            <person name="Ward N.L."/>
            <person name="Nelson W.C."/>
            <person name="DeBoy R.T."/>
            <person name="Khouri H.M."/>
            <person name="Kolonay J.F."/>
            <person name="Dodson R.J."/>
            <person name="Daugherty S.C."/>
            <person name="Brinkac L.M."/>
            <person name="Sullivan S.A."/>
            <person name="Madupu R."/>
            <person name="Nelson K.E."/>
            <person name="Kang K.H."/>
            <person name="Impraim M."/>
            <person name="Tran K."/>
            <person name="Robinson J.M."/>
            <person name="Forberger H.A."/>
            <person name="Fraser C.M."/>
            <person name="Zinder S.H."/>
            <person name="Heidelberg J.F."/>
        </authorList>
    </citation>
    <scope>NUCLEOTIDE SEQUENCE [LARGE SCALE GENOMIC DNA]</scope>
    <source>
        <strain>ATCC BAA-2266 / KCTC 15142 / 195</strain>
    </source>
</reference>
<proteinExistence type="inferred from homology"/>